<proteinExistence type="inferred from homology"/>
<evidence type="ECO:0000255" key="1">
    <source>
        <dbReference type="HAMAP-Rule" id="MF_01496"/>
    </source>
</evidence>
<evidence type="ECO:0000305" key="2"/>
<geneLocation type="plastid"/>
<protein>
    <recommendedName>
        <fullName evidence="1">Photosystem II CP43 reaction center protein</fullName>
    </recommendedName>
    <alternativeName>
        <fullName evidence="1">PSII 43 kDa protein</fullName>
    </alternativeName>
    <alternativeName>
        <fullName evidence="1">Protein CP-43</fullName>
    </alternativeName>
</protein>
<accession>A7M8Z7</accession>
<gene>
    <name evidence="1" type="primary">psbC</name>
</gene>
<feature type="propeptide" id="PRO_0000431135" evidence="1">
    <location>
        <begin position="1"/>
        <end position="14"/>
    </location>
</feature>
<feature type="chain" id="PRO_0000361364" description="Photosystem II CP43 reaction center protein" evidence="1">
    <location>
        <begin position="15"/>
        <end position="473"/>
    </location>
</feature>
<feature type="transmembrane region" description="Helical" evidence="1">
    <location>
        <begin position="69"/>
        <end position="93"/>
    </location>
</feature>
<feature type="transmembrane region" description="Helical" evidence="1">
    <location>
        <begin position="134"/>
        <end position="155"/>
    </location>
</feature>
<feature type="transmembrane region" description="Helical" evidence="1">
    <location>
        <begin position="178"/>
        <end position="200"/>
    </location>
</feature>
<feature type="transmembrane region" description="Helical" evidence="1">
    <location>
        <begin position="255"/>
        <end position="275"/>
    </location>
</feature>
<feature type="transmembrane region" description="Helical" evidence="1">
    <location>
        <begin position="291"/>
        <end position="312"/>
    </location>
</feature>
<feature type="transmembrane region" description="Helical" evidence="1">
    <location>
        <begin position="447"/>
        <end position="471"/>
    </location>
</feature>
<feature type="binding site" evidence="1">
    <location>
        <position position="367"/>
    </location>
    <ligand>
        <name>[CaMn4O5] cluster</name>
        <dbReference type="ChEBI" id="CHEBI:189552"/>
    </ligand>
</feature>
<feature type="modified residue" description="N-acetylthreonine" evidence="1">
    <location>
        <position position="15"/>
    </location>
</feature>
<feature type="modified residue" description="Phosphothreonine" evidence="1">
    <location>
        <position position="15"/>
    </location>
</feature>
<dbReference type="EMBL" id="AM711639">
    <property type="protein sequence ID" value="CAM98325.1"/>
    <property type="molecule type" value="Genomic_DNA"/>
</dbReference>
<dbReference type="RefSeq" id="YP_001430039.2">
    <property type="nucleotide sequence ID" value="NC_009765.1"/>
</dbReference>
<dbReference type="SMR" id="A7M8Z7"/>
<dbReference type="GeneID" id="5536738"/>
<dbReference type="GO" id="GO:0009523">
    <property type="term" value="C:photosystem II"/>
    <property type="evidence" value="ECO:0007669"/>
    <property type="project" value="UniProtKB-KW"/>
</dbReference>
<dbReference type="GO" id="GO:0042170">
    <property type="term" value="C:plastid membrane"/>
    <property type="evidence" value="ECO:0007669"/>
    <property type="project" value="UniProtKB-SubCell"/>
</dbReference>
<dbReference type="GO" id="GO:0042651">
    <property type="term" value="C:thylakoid membrane"/>
    <property type="evidence" value="ECO:0007669"/>
    <property type="project" value="UniProtKB-UniRule"/>
</dbReference>
<dbReference type="GO" id="GO:0016168">
    <property type="term" value="F:chlorophyll binding"/>
    <property type="evidence" value="ECO:0007669"/>
    <property type="project" value="UniProtKB-UniRule"/>
</dbReference>
<dbReference type="GO" id="GO:0045156">
    <property type="term" value="F:electron transporter, transferring electrons within the cyclic electron transport pathway of photosynthesis activity"/>
    <property type="evidence" value="ECO:0007669"/>
    <property type="project" value="InterPro"/>
</dbReference>
<dbReference type="GO" id="GO:0046872">
    <property type="term" value="F:metal ion binding"/>
    <property type="evidence" value="ECO:0007669"/>
    <property type="project" value="UniProtKB-KW"/>
</dbReference>
<dbReference type="GO" id="GO:0009772">
    <property type="term" value="P:photosynthetic electron transport in photosystem II"/>
    <property type="evidence" value="ECO:0007669"/>
    <property type="project" value="InterPro"/>
</dbReference>
<dbReference type="FunFam" id="1.10.10.670:FF:000001">
    <property type="entry name" value="Photosystem II CP43 reaction center protein"/>
    <property type="match status" value="1"/>
</dbReference>
<dbReference type="Gene3D" id="1.10.10.670">
    <property type="entry name" value="photosystem ii from thermosynechococcus elongatus"/>
    <property type="match status" value="1"/>
</dbReference>
<dbReference type="HAMAP" id="MF_01496">
    <property type="entry name" value="PSII_PsbC_CP43"/>
    <property type="match status" value="1"/>
</dbReference>
<dbReference type="InterPro" id="IPR000932">
    <property type="entry name" value="PS_antenna-like"/>
</dbReference>
<dbReference type="InterPro" id="IPR036001">
    <property type="entry name" value="PS_II_antenna-like_sf"/>
</dbReference>
<dbReference type="InterPro" id="IPR005869">
    <property type="entry name" value="PSII_PsbC"/>
</dbReference>
<dbReference type="InterPro" id="IPR044900">
    <property type="entry name" value="PSII_PsbC_sf"/>
</dbReference>
<dbReference type="NCBIfam" id="TIGR01153">
    <property type="entry name" value="psbC"/>
    <property type="match status" value="1"/>
</dbReference>
<dbReference type="Pfam" id="PF00421">
    <property type="entry name" value="PSII"/>
    <property type="match status" value="1"/>
</dbReference>
<dbReference type="SUPFAM" id="SSF161077">
    <property type="entry name" value="Photosystem II antenna protein-like"/>
    <property type="match status" value="1"/>
</dbReference>
<keyword id="KW-0007">Acetylation</keyword>
<keyword id="KW-0148">Chlorophyll</keyword>
<keyword id="KW-0157">Chromophore</keyword>
<keyword id="KW-0464">Manganese</keyword>
<keyword id="KW-0472">Membrane</keyword>
<keyword id="KW-0479">Metal-binding</keyword>
<keyword id="KW-0597">Phosphoprotein</keyword>
<keyword id="KW-0602">Photosynthesis</keyword>
<keyword id="KW-0604">Photosystem II</keyword>
<keyword id="KW-0934">Plastid</keyword>
<keyword id="KW-0812">Transmembrane</keyword>
<keyword id="KW-1133">Transmembrane helix</keyword>
<reference key="1">
    <citation type="journal article" date="2007" name="BMC Plant Biol.">
        <title>Complete DNA sequences of the plastid genomes of two parasitic flowering plant species, Cuscuta reflexa and Cuscuta gronovii.</title>
        <authorList>
            <person name="Funk H.T."/>
            <person name="Berg S."/>
            <person name="Krupinska K."/>
            <person name="Maier U.-G."/>
            <person name="Krause K."/>
        </authorList>
    </citation>
    <scope>NUCLEOTIDE SEQUENCE [LARGE SCALE GENOMIC DNA]</scope>
</reference>
<comment type="function">
    <text evidence="1">One of the components of the core complex of photosystem II (PSII). It binds chlorophyll and helps catalyze the primary light-induced photochemical processes of PSII. PSII is a light-driven water:plastoquinone oxidoreductase, using light energy to abstract electrons from H(2)O, generating O(2) and a proton gradient subsequently used for ATP formation.</text>
</comment>
<comment type="cofactor">
    <text evidence="1">Binds multiple chlorophylls and provides some of the ligands for the Ca-4Mn-5O cluster of the oxygen-evolving complex. It may also provide a ligand for a Cl- that is required for oxygen evolution. PSII binds additional chlorophylls, carotenoids and specific lipids.</text>
</comment>
<comment type="subunit">
    <text evidence="1">PSII is composed of 1 copy each of membrane proteins PsbA, PsbB, PsbC, PsbD, PsbE, PsbF, PsbH, PsbI, PsbJ, PsbK, PsbL, PsbM, PsbT, PsbX, PsbY, PsbZ, Psb30/Ycf12, at least 3 peripheral proteins of the oxygen-evolving complex and a large number of cofactors. It forms dimeric complexes.</text>
</comment>
<comment type="subcellular location">
    <subcellularLocation>
        <location evidence="2">Plastid membrane</location>
        <topology evidence="2">Multi-pass membrane protein</topology>
    </subcellularLocation>
</comment>
<comment type="similarity">
    <text evidence="1">Belongs to the PsbB/PsbC family. PsbC subfamily.</text>
</comment>
<comment type="caution">
    <text evidence="2">Young tissue from this organism is photosynthetic and contains some thylakoids, although the photosynthetic activity does not exceed the light compensation point.</text>
</comment>
<organism>
    <name type="scientific">Cuscuta gronovii</name>
    <name type="common">Common dodder</name>
    <name type="synonym">Epithymum gronovii</name>
    <dbReference type="NCBI Taxonomy" id="35886"/>
    <lineage>
        <taxon>Eukaryota</taxon>
        <taxon>Viridiplantae</taxon>
        <taxon>Streptophyta</taxon>
        <taxon>Embryophyta</taxon>
        <taxon>Tracheophyta</taxon>
        <taxon>Spermatophyta</taxon>
        <taxon>Magnoliopsida</taxon>
        <taxon>eudicotyledons</taxon>
        <taxon>Gunneridae</taxon>
        <taxon>Pentapetalae</taxon>
        <taxon>asterids</taxon>
        <taxon>lamiids</taxon>
        <taxon>Solanales</taxon>
        <taxon>Convolvulaceae</taxon>
        <taxon>Cuscuteae</taxon>
        <taxon>Cuscuta</taxon>
        <taxon>Cuscuta subgen. Grammica</taxon>
        <taxon>Cuscuta sect. Oxycarpae</taxon>
    </lineage>
</organism>
<name>PSBC_CUSGR</name>
<sequence>MKTLYSLRRFSHVETLFNTTLTVAGRDQETTGFAWWAGNARLINLSGKLLGAHVAHAGLIVFWAGAMNLFEVAHFGPEKPMYEQGLILLPHLATLGWGVGPGGEIIDTFPYFVSGVLHLISSAVLGFGGIYHALLGPEIIEESFPLFRYVWKDRNKMTTILGIHLILLGIGAFLLVFKALYFGGVYDTWAPGGGDVRKITNLTLSPSIIFGFLLKSPFGGDGWIVSVDDLEDIIGGHVWVGSICIFGGIWHILTKPFAWARRALVWSGEAYLSYSLGALSLFGFTACCFVWFNNTAYPSEFYGPTGPEASQAQAFTFLVRDQRLGANVGAAQGPTGLGKYLMRSPTGEVIFGGETMRFWDLRAPWLEPLRGPNGLDLNRLKKDIQPWQERRSAEYMTHAPLGSLNSVGGVATEINAVNYVSPRSWLATSHFCLGFFFFVGHLWHAGRARAAAAGFEKGIDRDFEPVLSMTPLN</sequence>